<reference key="1">
    <citation type="journal article" date="2002" name="Nature">
        <title>Genome sequence of the plant pathogen Ralstonia solanacearum.</title>
        <authorList>
            <person name="Salanoubat M."/>
            <person name="Genin S."/>
            <person name="Artiguenave F."/>
            <person name="Gouzy J."/>
            <person name="Mangenot S."/>
            <person name="Arlat M."/>
            <person name="Billault A."/>
            <person name="Brottier P."/>
            <person name="Camus J.-C."/>
            <person name="Cattolico L."/>
            <person name="Chandler M."/>
            <person name="Choisne N."/>
            <person name="Claudel-Renard C."/>
            <person name="Cunnac S."/>
            <person name="Demange N."/>
            <person name="Gaspin C."/>
            <person name="Lavie M."/>
            <person name="Moisan A."/>
            <person name="Robert C."/>
            <person name="Saurin W."/>
            <person name="Schiex T."/>
            <person name="Siguier P."/>
            <person name="Thebault P."/>
            <person name="Whalen M."/>
            <person name="Wincker P."/>
            <person name="Levy M."/>
            <person name="Weissenbach J."/>
            <person name="Boucher C.A."/>
        </authorList>
    </citation>
    <scope>NUCLEOTIDE SEQUENCE [LARGE SCALE GENOMIC DNA]</scope>
    <source>
        <strain>ATCC BAA-1114 / GMI1000</strain>
    </source>
</reference>
<keyword id="KW-0963">Cytoplasm</keyword>
<keyword id="KW-0378">Hydrolase</keyword>
<keyword id="KW-0479">Metal-binding</keyword>
<keyword id="KW-0547">Nucleotide-binding</keyword>
<keyword id="KW-1185">Reference proteome</keyword>
<sequence length="251" mass="27087">MHILLANDDGYLAPGLAALHRALAPLGRITVVAPEQNHSGASNSLTLQRPLSVFQATEGAQKGFRFVNGTPTDCVHIALTGMIEERPDLVVSGINQGQNMGEDVLYSGTVAAAIEGYLFGVPSIAFSQVDKGWTHLDAAERIAREVVERYLSDPPAGPVLLNVNIPNLPYAEVAGWRATRLGKRHQSQPVIRQENPRGEPIYWVGAAGDAKDASEGTDFHAVAHGFVSLTPLQLDLTDTAQLRSVRRWQTP</sequence>
<accession>Q8Y040</accession>
<organism>
    <name type="scientific">Ralstonia nicotianae (strain ATCC BAA-1114 / GMI1000)</name>
    <name type="common">Ralstonia solanacearum</name>
    <dbReference type="NCBI Taxonomy" id="267608"/>
    <lineage>
        <taxon>Bacteria</taxon>
        <taxon>Pseudomonadati</taxon>
        <taxon>Pseudomonadota</taxon>
        <taxon>Betaproteobacteria</taxon>
        <taxon>Burkholderiales</taxon>
        <taxon>Burkholderiaceae</taxon>
        <taxon>Ralstonia</taxon>
        <taxon>Ralstonia solanacearum species complex</taxon>
    </lineage>
</organism>
<feature type="chain" id="PRO_0000111834" description="5'-nucleotidase SurE">
    <location>
        <begin position="1"/>
        <end position="251"/>
    </location>
</feature>
<feature type="binding site" evidence="1">
    <location>
        <position position="8"/>
    </location>
    <ligand>
        <name>a divalent metal cation</name>
        <dbReference type="ChEBI" id="CHEBI:60240"/>
    </ligand>
</feature>
<feature type="binding site" evidence="1">
    <location>
        <position position="9"/>
    </location>
    <ligand>
        <name>a divalent metal cation</name>
        <dbReference type="ChEBI" id="CHEBI:60240"/>
    </ligand>
</feature>
<feature type="binding site" evidence="1">
    <location>
        <position position="39"/>
    </location>
    <ligand>
        <name>a divalent metal cation</name>
        <dbReference type="ChEBI" id="CHEBI:60240"/>
    </ligand>
</feature>
<feature type="binding site" evidence="1">
    <location>
        <position position="95"/>
    </location>
    <ligand>
        <name>a divalent metal cation</name>
        <dbReference type="ChEBI" id="CHEBI:60240"/>
    </ligand>
</feature>
<proteinExistence type="inferred from homology"/>
<dbReference type="EC" id="3.1.3.5" evidence="1"/>
<dbReference type="EMBL" id="AL646052">
    <property type="protein sequence ID" value="CAD14906.1"/>
    <property type="molecule type" value="Genomic_DNA"/>
</dbReference>
<dbReference type="RefSeq" id="WP_011001154.1">
    <property type="nucleotide sequence ID" value="NC_003295.1"/>
</dbReference>
<dbReference type="SMR" id="Q8Y040"/>
<dbReference type="STRING" id="267608.RSc1204"/>
<dbReference type="EnsemblBacteria" id="CAD14906">
    <property type="protein sequence ID" value="CAD14906"/>
    <property type="gene ID" value="RSc1204"/>
</dbReference>
<dbReference type="GeneID" id="93852324"/>
<dbReference type="KEGG" id="rso:RSc1204"/>
<dbReference type="eggNOG" id="COG0496">
    <property type="taxonomic scope" value="Bacteria"/>
</dbReference>
<dbReference type="HOGENOM" id="CLU_045192_1_2_4"/>
<dbReference type="Proteomes" id="UP000001436">
    <property type="component" value="Chromosome"/>
</dbReference>
<dbReference type="GO" id="GO:0005737">
    <property type="term" value="C:cytoplasm"/>
    <property type="evidence" value="ECO:0007669"/>
    <property type="project" value="UniProtKB-SubCell"/>
</dbReference>
<dbReference type="GO" id="GO:0008254">
    <property type="term" value="F:3'-nucleotidase activity"/>
    <property type="evidence" value="ECO:0007669"/>
    <property type="project" value="TreeGrafter"/>
</dbReference>
<dbReference type="GO" id="GO:0008253">
    <property type="term" value="F:5'-nucleotidase activity"/>
    <property type="evidence" value="ECO:0007669"/>
    <property type="project" value="UniProtKB-UniRule"/>
</dbReference>
<dbReference type="GO" id="GO:0004309">
    <property type="term" value="F:exopolyphosphatase activity"/>
    <property type="evidence" value="ECO:0007669"/>
    <property type="project" value="TreeGrafter"/>
</dbReference>
<dbReference type="GO" id="GO:0046872">
    <property type="term" value="F:metal ion binding"/>
    <property type="evidence" value="ECO:0007669"/>
    <property type="project" value="UniProtKB-UniRule"/>
</dbReference>
<dbReference type="GO" id="GO:0000166">
    <property type="term" value="F:nucleotide binding"/>
    <property type="evidence" value="ECO:0007669"/>
    <property type="project" value="UniProtKB-KW"/>
</dbReference>
<dbReference type="FunFam" id="3.40.1210.10:FF:000001">
    <property type="entry name" value="5'/3'-nucleotidase SurE"/>
    <property type="match status" value="1"/>
</dbReference>
<dbReference type="Gene3D" id="3.40.1210.10">
    <property type="entry name" value="Survival protein SurE-like phosphatase/nucleotidase"/>
    <property type="match status" value="1"/>
</dbReference>
<dbReference type="HAMAP" id="MF_00060">
    <property type="entry name" value="SurE"/>
    <property type="match status" value="1"/>
</dbReference>
<dbReference type="InterPro" id="IPR030048">
    <property type="entry name" value="SurE"/>
</dbReference>
<dbReference type="InterPro" id="IPR002828">
    <property type="entry name" value="SurE-like_Pase/nucleotidase"/>
</dbReference>
<dbReference type="InterPro" id="IPR036523">
    <property type="entry name" value="SurE-like_sf"/>
</dbReference>
<dbReference type="NCBIfam" id="NF001489">
    <property type="entry name" value="PRK00346.1-3"/>
    <property type="match status" value="1"/>
</dbReference>
<dbReference type="NCBIfam" id="NF001490">
    <property type="entry name" value="PRK00346.1-4"/>
    <property type="match status" value="1"/>
</dbReference>
<dbReference type="NCBIfam" id="TIGR00087">
    <property type="entry name" value="surE"/>
    <property type="match status" value="1"/>
</dbReference>
<dbReference type="PANTHER" id="PTHR30457">
    <property type="entry name" value="5'-NUCLEOTIDASE SURE"/>
    <property type="match status" value="1"/>
</dbReference>
<dbReference type="PANTHER" id="PTHR30457:SF12">
    <property type="entry name" value="5'_3'-NUCLEOTIDASE SURE"/>
    <property type="match status" value="1"/>
</dbReference>
<dbReference type="Pfam" id="PF01975">
    <property type="entry name" value="SurE"/>
    <property type="match status" value="1"/>
</dbReference>
<dbReference type="SUPFAM" id="SSF64167">
    <property type="entry name" value="SurE-like"/>
    <property type="match status" value="1"/>
</dbReference>
<protein>
    <recommendedName>
        <fullName evidence="1">5'-nucleotidase SurE</fullName>
        <ecNumber evidence="1">3.1.3.5</ecNumber>
    </recommendedName>
    <alternativeName>
        <fullName evidence="1">Nucleoside 5'-monophosphate phosphohydrolase</fullName>
    </alternativeName>
</protein>
<evidence type="ECO:0000255" key="1">
    <source>
        <dbReference type="HAMAP-Rule" id="MF_00060"/>
    </source>
</evidence>
<name>SURE_RALN1</name>
<gene>
    <name evidence="1" type="primary">surE</name>
    <name type="ordered locus">RSc1204</name>
    <name type="ORF">RS02681</name>
</gene>
<comment type="function">
    <text evidence="1">Nucleotidase that shows phosphatase activity on nucleoside 5'-monophosphates.</text>
</comment>
<comment type="catalytic activity">
    <reaction evidence="1">
        <text>a ribonucleoside 5'-phosphate + H2O = a ribonucleoside + phosphate</text>
        <dbReference type="Rhea" id="RHEA:12484"/>
        <dbReference type="ChEBI" id="CHEBI:15377"/>
        <dbReference type="ChEBI" id="CHEBI:18254"/>
        <dbReference type="ChEBI" id="CHEBI:43474"/>
        <dbReference type="ChEBI" id="CHEBI:58043"/>
        <dbReference type="EC" id="3.1.3.5"/>
    </reaction>
</comment>
<comment type="cofactor">
    <cofactor evidence="1">
        <name>a divalent metal cation</name>
        <dbReference type="ChEBI" id="CHEBI:60240"/>
    </cofactor>
    <text evidence="1">Binds 1 divalent metal cation per subunit.</text>
</comment>
<comment type="subcellular location">
    <subcellularLocation>
        <location evidence="1">Cytoplasm</location>
    </subcellularLocation>
</comment>
<comment type="similarity">
    <text evidence="1">Belongs to the SurE nucleotidase family.</text>
</comment>